<proteinExistence type="evidence at protein level"/>
<sequence length="355" mass="41235">MASLLAKDTYLQDLAKKICAQPGPERQRSTWGVRTKGSEAAGAPKKKRKKTQKKSPEQEQKAMDHKTKALGKKPPTSSRPKNPMVSKQEKGLSSLGSPKDSQGTARESVFALDFLRQRLHEKIQLARGQGSTKELSAATLEKRQRRKQERERKKRKRKERQAKQQVAEAEKKEEPVEVTPKMACKELQESGLIFNKVEVTEEEPASKAQRKKEKRQKVKGNLTPLTGRNYRQLLDRLQARQGRLDELRDQDAAKAQELEAKMKWTNLLYKAEGVKIRDDERLLQEALKRKEKRRAQRQRKWEKRSEHVVEKMQQRQDKRRQNLRKKKAARAERRLQKAHKKGRVLPQDLERAGLS</sequence>
<name>SURF6_MOUSE</name>
<gene>
    <name type="primary">Surf6</name>
    <name type="synonym">Surf-6</name>
</gene>
<reference key="1">
    <citation type="journal article" date="1996" name="DNA Cell Biol.">
        <title>The Surf-6 gene of the mouse surfeit locus encodes a novel nucleolar protein.</title>
        <authorList>
            <person name="Magoulas C."/>
            <person name="Fried M."/>
        </authorList>
    </citation>
    <scope>NUCLEOTIDE SEQUENCE [MRNA]</scope>
    <scope>SUBCELLULAR LOCATION</scope>
</reference>
<reference key="2">
    <citation type="journal article" date="2004" name="Genome Res.">
        <title>The status, quality, and expansion of the NIH full-length cDNA project: the Mammalian Gene Collection (MGC).</title>
        <authorList>
            <consortium name="The MGC Project Team"/>
        </authorList>
    </citation>
    <scope>NUCLEOTIDE SEQUENCE [LARGE SCALE MRNA]</scope>
    <source>
        <strain>FVB/N</strain>
        <tissue>Mammary gland</tissue>
        <tissue>Salivary gland</tissue>
    </source>
</reference>
<reference key="3">
    <citation type="journal article" date="2005" name="Science">
        <title>The transcriptional landscape of the mammalian genome.</title>
        <authorList>
            <person name="Carninci P."/>
            <person name="Kasukawa T."/>
            <person name="Katayama S."/>
            <person name="Gough J."/>
            <person name="Frith M.C."/>
            <person name="Maeda N."/>
            <person name="Oyama R."/>
            <person name="Ravasi T."/>
            <person name="Lenhard B."/>
            <person name="Wells C."/>
            <person name="Kodzius R."/>
            <person name="Shimokawa K."/>
            <person name="Bajic V.B."/>
            <person name="Brenner S.E."/>
            <person name="Batalov S."/>
            <person name="Forrest A.R."/>
            <person name="Zavolan M."/>
            <person name="Davis M.J."/>
            <person name="Wilming L.G."/>
            <person name="Aidinis V."/>
            <person name="Allen J.E."/>
            <person name="Ambesi-Impiombato A."/>
            <person name="Apweiler R."/>
            <person name="Aturaliya R.N."/>
            <person name="Bailey T.L."/>
            <person name="Bansal M."/>
            <person name="Baxter L."/>
            <person name="Beisel K.W."/>
            <person name="Bersano T."/>
            <person name="Bono H."/>
            <person name="Chalk A.M."/>
            <person name="Chiu K.P."/>
            <person name="Choudhary V."/>
            <person name="Christoffels A."/>
            <person name="Clutterbuck D.R."/>
            <person name="Crowe M.L."/>
            <person name="Dalla E."/>
            <person name="Dalrymple B.P."/>
            <person name="de Bono B."/>
            <person name="Della Gatta G."/>
            <person name="di Bernardo D."/>
            <person name="Down T."/>
            <person name="Engstrom P."/>
            <person name="Fagiolini M."/>
            <person name="Faulkner G."/>
            <person name="Fletcher C.F."/>
            <person name="Fukushima T."/>
            <person name="Furuno M."/>
            <person name="Futaki S."/>
            <person name="Gariboldi M."/>
            <person name="Georgii-Hemming P."/>
            <person name="Gingeras T.R."/>
            <person name="Gojobori T."/>
            <person name="Green R.E."/>
            <person name="Gustincich S."/>
            <person name="Harbers M."/>
            <person name="Hayashi Y."/>
            <person name="Hensch T.K."/>
            <person name="Hirokawa N."/>
            <person name="Hill D."/>
            <person name="Huminiecki L."/>
            <person name="Iacono M."/>
            <person name="Ikeo K."/>
            <person name="Iwama A."/>
            <person name="Ishikawa T."/>
            <person name="Jakt M."/>
            <person name="Kanapin A."/>
            <person name="Katoh M."/>
            <person name="Kawasawa Y."/>
            <person name="Kelso J."/>
            <person name="Kitamura H."/>
            <person name="Kitano H."/>
            <person name="Kollias G."/>
            <person name="Krishnan S.P."/>
            <person name="Kruger A."/>
            <person name="Kummerfeld S.K."/>
            <person name="Kurochkin I.V."/>
            <person name="Lareau L.F."/>
            <person name="Lazarevic D."/>
            <person name="Lipovich L."/>
            <person name="Liu J."/>
            <person name="Liuni S."/>
            <person name="McWilliam S."/>
            <person name="Madan Babu M."/>
            <person name="Madera M."/>
            <person name="Marchionni L."/>
            <person name="Matsuda H."/>
            <person name="Matsuzawa S."/>
            <person name="Miki H."/>
            <person name="Mignone F."/>
            <person name="Miyake S."/>
            <person name="Morris K."/>
            <person name="Mottagui-Tabar S."/>
            <person name="Mulder N."/>
            <person name="Nakano N."/>
            <person name="Nakauchi H."/>
            <person name="Ng P."/>
            <person name="Nilsson R."/>
            <person name="Nishiguchi S."/>
            <person name="Nishikawa S."/>
            <person name="Nori F."/>
            <person name="Ohara O."/>
            <person name="Okazaki Y."/>
            <person name="Orlando V."/>
            <person name="Pang K.C."/>
            <person name="Pavan W.J."/>
            <person name="Pavesi G."/>
            <person name="Pesole G."/>
            <person name="Petrovsky N."/>
            <person name="Piazza S."/>
            <person name="Reed J."/>
            <person name="Reid J.F."/>
            <person name="Ring B.Z."/>
            <person name="Ringwald M."/>
            <person name="Rost B."/>
            <person name="Ruan Y."/>
            <person name="Salzberg S.L."/>
            <person name="Sandelin A."/>
            <person name="Schneider C."/>
            <person name="Schoenbach C."/>
            <person name="Sekiguchi K."/>
            <person name="Semple C.A."/>
            <person name="Seno S."/>
            <person name="Sessa L."/>
            <person name="Sheng Y."/>
            <person name="Shibata Y."/>
            <person name="Shimada H."/>
            <person name="Shimada K."/>
            <person name="Silva D."/>
            <person name="Sinclair B."/>
            <person name="Sperling S."/>
            <person name="Stupka E."/>
            <person name="Sugiura K."/>
            <person name="Sultana R."/>
            <person name="Takenaka Y."/>
            <person name="Taki K."/>
            <person name="Tammoja K."/>
            <person name="Tan S.L."/>
            <person name="Tang S."/>
            <person name="Taylor M.S."/>
            <person name="Tegner J."/>
            <person name="Teichmann S.A."/>
            <person name="Ueda H.R."/>
            <person name="van Nimwegen E."/>
            <person name="Verardo R."/>
            <person name="Wei C.L."/>
            <person name="Yagi K."/>
            <person name="Yamanishi H."/>
            <person name="Zabarovsky E."/>
            <person name="Zhu S."/>
            <person name="Zimmer A."/>
            <person name="Hide W."/>
            <person name="Bult C."/>
            <person name="Grimmond S.M."/>
            <person name="Teasdale R.D."/>
            <person name="Liu E.T."/>
            <person name="Brusic V."/>
            <person name="Quackenbush J."/>
            <person name="Wahlestedt C."/>
            <person name="Mattick J.S."/>
            <person name="Hume D.A."/>
            <person name="Kai C."/>
            <person name="Sasaki D."/>
            <person name="Tomaru Y."/>
            <person name="Fukuda S."/>
            <person name="Kanamori-Katayama M."/>
            <person name="Suzuki M."/>
            <person name="Aoki J."/>
            <person name="Arakawa T."/>
            <person name="Iida J."/>
            <person name="Imamura K."/>
            <person name="Itoh M."/>
            <person name="Kato T."/>
            <person name="Kawaji H."/>
            <person name="Kawagashira N."/>
            <person name="Kawashima T."/>
            <person name="Kojima M."/>
            <person name="Kondo S."/>
            <person name="Konno H."/>
            <person name="Nakano K."/>
            <person name="Ninomiya N."/>
            <person name="Nishio T."/>
            <person name="Okada M."/>
            <person name="Plessy C."/>
            <person name="Shibata K."/>
            <person name="Shiraki T."/>
            <person name="Suzuki S."/>
            <person name="Tagami M."/>
            <person name="Waki K."/>
            <person name="Watahiki A."/>
            <person name="Okamura-Oho Y."/>
            <person name="Suzuki H."/>
            <person name="Kawai J."/>
            <person name="Hayashizaki Y."/>
        </authorList>
    </citation>
    <scope>NUCLEOTIDE SEQUENCE [LARGE SCALE MRNA] OF 235-355</scope>
    <source>
        <strain>C57BL/6J</strain>
        <tissue>Brain cortex</tissue>
        <tissue>Embryo</tissue>
    </source>
</reference>
<reference key="4">
    <citation type="journal article" date="1998" name="Eur. J. Cell Biol.">
        <title>The SURF-6 protein is a component of the nucleolar matrix and has a high binding capacity for nucleic acids in vitro.</title>
        <authorList>
            <person name="Magoulas C."/>
            <person name="Zatsepina O.V."/>
            <person name="Jordan P.W."/>
            <person name="Jordan E.G."/>
            <person name="Fried M."/>
        </authorList>
    </citation>
    <scope>FUNCTION</scope>
    <scope>SUBCELLULAR LOCATION</scope>
</reference>
<reference key="5">
    <citation type="journal article" date="2014" name="Nature">
        <title>Citrullination regulates pluripotency and histone H1 binding to chromatin.</title>
        <authorList>
            <person name="Christophorou M.A."/>
            <person name="Castelo-Branco G."/>
            <person name="Halley-Stott R.P."/>
            <person name="Oliveira C.S."/>
            <person name="Loos R."/>
            <person name="Radzisheuskaya A."/>
            <person name="Mowen K.A."/>
            <person name="Bertone P."/>
            <person name="Silva J.C."/>
            <person name="Zernicka-Goetz M."/>
            <person name="Nielsen M.L."/>
            <person name="Gurdon J.B."/>
            <person name="Kouzarides T."/>
        </authorList>
    </citation>
    <scope>CITRULLINATION AT ARG-106</scope>
</reference>
<keyword id="KW-0164">Citrullination</keyword>
<keyword id="KW-0238">DNA-binding</keyword>
<keyword id="KW-0539">Nucleus</keyword>
<keyword id="KW-0597">Phosphoprotein</keyword>
<keyword id="KW-1185">Reference proteome</keyword>
<keyword id="KW-0694">RNA-binding</keyword>
<comment type="function">
    <text evidence="6">Binds to both DNA and RNA in vitro, with a stronger binding capacity for RNA. May represent a nucleolar constitutive protein involved in ribosomal biosynthesis or assembly.</text>
</comment>
<comment type="subcellular location">
    <subcellularLocation>
        <location evidence="5 6">Nucleus</location>
        <location evidence="5 6">Nucleoplasm</location>
    </subcellularLocation>
    <text>Granular component of the nucleolus.</text>
</comment>
<comment type="tissue specificity">
    <text>Expressed in all tissues tested, including heart, brain, spleen, lung, liver, muscle, kidney and testis.</text>
</comment>
<comment type="PTM">
    <text evidence="4">Citrullinated by PADI4.</text>
</comment>
<comment type="similarity">
    <text evidence="7">Belongs to the SURF6 family.</text>
</comment>
<accession>P70279</accession>
<accession>Q8BPI4</accession>
<accession>Q8BRL7</accession>
<accession>Q8R0Q7</accession>
<protein>
    <recommendedName>
        <fullName>Surfeit locus protein 6</fullName>
    </recommendedName>
</protein>
<organism>
    <name type="scientific">Mus musculus</name>
    <name type="common">Mouse</name>
    <dbReference type="NCBI Taxonomy" id="10090"/>
    <lineage>
        <taxon>Eukaryota</taxon>
        <taxon>Metazoa</taxon>
        <taxon>Chordata</taxon>
        <taxon>Craniata</taxon>
        <taxon>Vertebrata</taxon>
        <taxon>Euteleostomi</taxon>
        <taxon>Mammalia</taxon>
        <taxon>Eutheria</taxon>
        <taxon>Euarchontoglires</taxon>
        <taxon>Glires</taxon>
        <taxon>Rodentia</taxon>
        <taxon>Myomorpha</taxon>
        <taxon>Muroidea</taxon>
        <taxon>Muridae</taxon>
        <taxon>Murinae</taxon>
        <taxon>Mus</taxon>
        <taxon>Mus</taxon>
    </lineage>
</organism>
<dbReference type="EMBL" id="X92842">
    <property type="protein sequence ID" value="CAA63428.1"/>
    <property type="molecule type" value="mRNA"/>
</dbReference>
<dbReference type="EMBL" id="BC026514">
    <property type="protein sequence ID" value="AAH26514.1"/>
    <property type="molecule type" value="mRNA"/>
</dbReference>
<dbReference type="EMBL" id="BC037634">
    <property type="protein sequence ID" value="AAH37634.1"/>
    <property type="molecule type" value="mRNA"/>
</dbReference>
<dbReference type="EMBL" id="AK043984">
    <property type="protein sequence ID" value="BAC31725.1"/>
    <property type="molecule type" value="mRNA"/>
</dbReference>
<dbReference type="EMBL" id="AK075636">
    <property type="protein sequence ID" value="BAC35872.1"/>
    <property type="molecule type" value="mRNA"/>
</dbReference>
<dbReference type="CCDS" id="CCDS15812.1"/>
<dbReference type="RefSeq" id="NP_033324.1">
    <property type="nucleotide sequence ID" value="NM_009298.4"/>
</dbReference>
<dbReference type="SMR" id="P70279"/>
<dbReference type="BioGRID" id="203584">
    <property type="interactions" value="26"/>
</dbReference>
<dbReference type="FunCoup" id="P70279">
    <property type="interactions" value="1655"/>
</dbReference>
<dbReference type="STRING" id="10090.ENSMUSP00000048457"/>
<dbReference type="GlyGen" id="P70279">
    <property type="glycosylation" value="1 site, 1 O-linked glycan (1 site)"/>
</dbReference>
<dbReference type="iPTMnet" id="P70279"/>
<dbReference type="PhosphoSitePlus" id="P70279"/>
<dbReference type="jPOST" id="P70279"/>
<dbReference type="PaxDb" id="10090-ENSMUSP00000048457"/>
<dbReference type="PeptideAtlas" id="P70279"/>
<dbReference type="ProteomicsDB" id="258781"/>
<dbReference type="Pumba" id="P70279"/>
<dbReference type="Antibodypedia" id="18324">
    <property type="antibodies" value="111 antibodies from 17 providers"/>
</dbReference>
<dbReference type="DNASU" id="20935"/>
<dbReference type="Ensembl" id="ENSMUST00000047632.14">
    <property type="protein sequence ID" value="ENSMUSP00000048457.8"/>
    <property type="gene ID" value="ENSMUSG00000036160.14"/>
</dbReference>
<dbReference type="GeneID" id="20935"/>
<dbReference type="KEGG" id="mmu:20935"/>
<dbReference type="UCSC" id="uc008iwc.1">
    <property type="organism name" value="mouse"/>
</dbReference>
<dbReference type="AGR" id="MGI:98447"/>
<dbReference type="CTD" id="6838"/>
<dbReference type="MGI" id="MGI:98447">
    <property type="gene designation" value="Surf6"/>
</dbReference>
<dbReference type="VEuPathDB" id="HostDB:ENSMUSG00000036160"/>
<dbReference type="eggNOG" id="KOG2885">
    <property type="taxonomic scope" value="Eukaryota"/>
</dbReference>
<dbReference type="GeneTree" id="ENSGT00390000006980"/>
<dbReference type="HOGENOM" id="CLU_067122_0_0_1"/>
<dbReference type="InParanoid" id="P70279"/>
<dbReference type="OMA" id="QKKRTDN"/>
<dbReference type="OrthoDB" id="444809at2759"/>
<dbReference type="PhylomeDB" id="P70279"/>
<dbReference type="TreeFam" id="TF321608"/>
<dbReference type="BioGRID-ORCS" id="20935">
    <property type="hits" value="20 hits in 77 CRISPR screens"/>
</dbReference>
<dbReference type="ChiTaRS" id="Surf6">
    <property type="organism name" value="mouse"/>
</dbReference>
<dbReference type="PRO" id="PR:P70279"/>
<dbReference type="Proteomes" id="UP000000589">
    <property type="component" value="Chromosome 2"/>
</dbReference>
<dbReference type="RNAct" id="P70279">
    <property type="molecule type" value="protein"/>
</dbReference>
<dbReference type="Bgee" id="ENSMUSG00000036160">
    <property type="expression patterns" value="Expressed in epiblast (generic) and 264 other cell types or tissues"/>
</dbReference>
<dbReference type="ExpressionAtlas" id="P70279">
    <property type="expression patterns" value="baseline and differential"/>
</dbReference>
<dbReference type="GO" id="GO:0005694">
    <property type="term" value="C:chromosome"/>
    <property type="evidence" value="ECO:0007669"/>
    <property type="project" value="Ensembl"/>
</dbReference>
<dbReference type="GO" id="GO:0001652">
    <property type="term" value="C:granular component"/>
    <property type="evidence" value="ECO:0000314"/>
    <property type="project" value="UniProtKB"/>
</dbReference>
<dbReference type="GO" id="GO:0005730">
    <property type="term" value="C:nucleolus"/>
    <property type="evidence" value="ECO:0000314"/>
    <property type="project" value="MGI"/>
</dbReference>
<dbReference type="GO" id="GO:0005654">
    <property type="term" value="C:nucleoplasm"/>
    <property type="evidence" value="ECO:0000314"/>
    <property type="project" value="MGI"/>
</dbReference>
<dbReference type="GO" id="GO:0003677">
    <property type="term" value="F:DNA binding"/>
    <property type="evidence" value="ECO:0000314"/>
    <property type="project" value="UniProtKB"/>
</dbReference>
<dbReference type="GO" id="GO:0140693">
    <property type="term" value="F:molecular condensate scaffold activity"/>
    <property type="evidence" value="ECO:0007669"/>
    <property type="project" value="Ensembl"/>
</dbReference>
<dbReference type="GO" id="GO:0003723">
    <property type="term" value="F:RNA binding"/>
    <property type="evidence" value="ECO:0000314"/>
    <property type="project" value="UniProtKB"/>
</dbReference>
<dbReference type="GO" id="GO:0042255">
    <property type="term" value="P:ribosome assembly"/>
    <property type="evidence" value="ECO:0000303"/>
    <property type="project" value="UniProtKB"/>
</dbReference>
<dbReference type="GO" id="GO:0042254">
    <property type="term" value="P:ribosome biogenesis"/>
    <property type="evidence" value="ECO:0000315"/>
    <property type="project" value="MGI"/>
</dbReference>
<dbReference type="InterPro" id="IPR029190">
    <property type="entry name" value="Rrp14/SURF6_C"/>
</dbReference>
<dbReference type="InterPro" id="IPR007019">
    <property type="entry name" value="SURF6"/>
</dbReference>
<dbReference type="PANTHER" id="PTHR14369">
    <property type="entry name" value="SURFEIT LOCUS PROTEIN 6"/>
    <property type="match status" value="1"/>
</dbReference>
<dbReference type="PANTHER" id="PTHR14369:SF0">
    <property type="entry name" value="SURFEIT LOCUS PROTEIN 6"/>
    <property type="match status" value="1"/>
</dbReference>
<dbReference type="Pfam" id="PF04935">
    <property type="entry name" value="SURF6"/>
    <property type="match status" value="1"/>
</dbReference>
<evidence type="ECO:0000250" key="1">
    <source>
        <dbReference type="UniProtKB" id="O75683"/>
    </source>
</evidence>
<evidence type="ECO:0000255" key="2"/>
<evidence type="ECO:0000256" key="3">
    <source>
        <dbReference type="SAM" id="MobiDB-lite"/>
    </source>
</evidence>
<evidence type="ECO:0000269" key="4">
    <source>
    </source>
</evidence>
<evidence type="ECO:0000269" key="5">
    <source>
    </source>
</evidence>
<evidence type="ECO:0000269" key="6">
    <source>
    </source>
</evidence>
<evidence type="ECO:0000305" key="7"/>
<feature type="chain" id="PRO_0000220970" description="Surfeit locus protein 6">
    <location>
        <begin position="1"/>
        <end position="355"/>
    </location>
</feature>
<feature type="region of interest" description="Disordered" evidence="3">
    <location>
        <begin position="18"/>
        <end position="104"/>
    </location>
</feature>
<feature type="region of interest" description="Disordered" evidence="3">
    <location>
        <begin position="123"/>
        <end position="178"/>
    </location>
</feature>
<feature type="region of interest" description="Disordered" evidence="3">
    <location>
        <begin position="198"/>
        <end position="227"/>
    </location>
</feature>
<feature type="region of interest" description="Disordered" evidence="3">
    <location>
        <begin position="290"/>
        <end position="355"/>
    </location>
</feature>
<feature type="short sequence motif" description="Nuclear localization signal" evidence="2">
    <location>
        <begin position="45"/>
        <end position="49"/>
    </location>
</feature>
<feature type="short sequence motif" description="Nuclear localization signal" evidence="2">
    <location>
        <begin position="152"/>
        <end position="156"/>
    </location>
</feature>
<feature type="compositionally biased region" description="Basic residues" evidence="3">
    <location>
        <begin position="44"/>
        <end position="53"/>
    </location>
</feature>
<feature type="compositionally biased region" description="Basic and acidic residues" evidence="3">
    <location>
        <begin position="54"/>
        <end position="67"/>
    </location>
</feature>
<feature type="compositionally biased region" description="Polar residues" evidence="3">
    <location>
        <begin position="94"/>
        <end position="104"/>
    </location>
</feature>
<feature type="compositionally biased region" description="Basic residues" evidence="3">
    <location>
        <begin position="143"/>
        <end position="160"/>
    </location>
</feature>
<feature type="compositionally biased region" description="Basic residues" evidence="3">
    <location>
        <begin position="208"/>
        <end position="218"/>
    </location>
</feature>
<feature type="compositionally biased region" description="Basic residues" evidence="3">
    <location>
        <begin position="290"/>
        <end position="302"/>
    </location>
</feature>
<feature type="compositionally biased region" description="Basic and acidic residues" evidence="3">
    <location>
        <begin position="303"/>
        <end position="320"/>
    </location>
</feature>
<feature type="modified residue" description="Citrulline" evidence="4">
    <location>
        <position position="106"/>
    </location>
</feature>
<feature type="modified residue" description="Phosphoserine" evidence="1">
    <location>
        <position position="136"/>
    </location>
</feature>
<feature type="modified residue" description="Phosphothreonine" evidence="1">
    <location>
        <position position="223"/>
    </location>
</feature>